<organism>
    <name type="scientific">Sodalis glossinidius (strain morsitans)</name>
    <dbReference type="NCBI Taxonomy" id="343509"/>
    <lineage>
        <taxon>Bacteria</taxon>
        <taxon>Pseudomonadati</taxon>
        <taxon>Pseudomonadota</taxon>
        <taxon>Gammaproteobacteria</taxon>
        <taxon>Enterobacterales</taxon>
        <taxon>Bruguierivoracaceae</taxon>
        <taxon>Sodalis</taxon>
    </lineage>
</organism>
<reference key="1">
    <citation type="journal article" date="2006" name="Genome Res.">
        <title>Massive genome erosion and functional adaptations provide insights into the symbiotic lifestyle of Sodalis glossinidius in the tsetse host.</title>
        <authorList>
            <person name="Toh H."/>
            <person name="Weiss B.L."/>
            <person name="Perkin S.A.H."/>
            <person name="Yamashita A."/>
            <person name="Oshima K."/>
            <person name="Hattori M."/>
            <person name="Aksoy S."/>
        </authorList>
    </citation>
    <scope>NUCLEOTIDE SEQUENCE [LARGE SCALE GENOMIC DNA]</scope>
    <source>
        <strain>morsitans</strain>
    </source>
</reference>
<gene>
    <name evidence="1" type="primary">rsgA</name>
    <name type="ordered locus">SG0313</name>
</gene>
<keyword id="KW-0963">Cytoplasm</keyword>
<keyword id="KW-0342">GTP-binding</keyword>
<keyword id="KW-0378">Hydrolase</keyword>
<keyword id="KW-0479">Metal-binding</keyword>
<keyword id="KW-0547">Nucleotide-binding</keyword>
<keyword id="KW-0690">Ribosome biogenesis</keyword>
<keyword id="KW-0694">RNA-binding</keyword>
<keyword id="KW-0699">rRNA-binding</keyword>
<keyword id="KW-0862">Zinc</keyword>
<proteinExistence type="inferred from homology"/>
<accession>Q2NW87</accession>
<sequence>MSKNKLSKGQERRVQANHQRRLQQRERGAAHWDDQPLGEAQEGVVVSRFGMHADVEDAAGRIYRCNLRRTLKSLVTGDKVVWRAGSEQPSGVSGIVEAVHPRRSVLTRPDVYDGVKPIAANMDQIVIVSALLPELSLNIIDRYLVACETVEVEPLIVLNKIDLLTPASRTEVEQLMAIYRRIGYRVLMVSSQTGEGMDPFREALTGRTSIFTGQSGVGKSSLLNALLPPEHEKILVNNVSDNSGLGQHTTTTARLYHFSHGGHLIDSPGVRELGLWHLAPERIARGFIEFREYLGTCKFRDCRHDTDPGCAIRGAVESGTIAHERFDNYHRIFDSMAQVNARKSF</sequence>
<comment type="function">
    <text evidence="1">One of several proteins that assist in the late maturation steps of the functional core of the 30S ribosomal subunit. Helps release RbfA from mature subunits. May play a role in the assembly of ribosomal proteins into the subunit. Circularly permuted GTPase that catalyzes slow GTP hydrolysis, GTPase activity is stimulated by the 30S ribosomal subunit.</text>
</comment>
<comment type="cofactor">
    <cofactor evidence="1">
        <name>Zn(2+)</name>
        <dbReference type="ChEBI" id="CHEBI:29105"/>
    </cofactor>
    <text evidence="1">Binds 1 zinc ion per subunit.</text>
</comment>
<comment type="subunit">
    <text evidence="1">Monomer. Associates with 30S ribosomal subunit, binds 16S rRNA.</text>
</comment>
<comment type="subcellular location">
    <subcellularLocation>
        <location evidence="1">Cytoplasm</location>
    </subcellularLocation>
</comment>
<comment type="similarity">
    <text evidence="1">Belongs to the TRAFAC class YlqF/YawG GTPase family. RsgA subfamily.</text>
</comment>
<protein>
    <recommendedName>
        <fullName evidence="1">Small ribosomal subunit biogenesis GTPase RsgA</fullName>
        <ecNumber evidence="1">3.6.1.-</ecNumber>
    </recommendedName>
</protein>
<dbReference type="EC" id="3.6.1.-" evidence="1"/>
<dbReference type="EMBL" id="AP008232">
    <property type="protein sequence ID" value="BAE73588.1"/>
    <property type="molecule type" value="Genomic_DNA"/>
</dbReference>
<dbReference type="RefSeq" id="WP_011410176.1">
    <property type="nucleotide sequence ID" value="NC_007712.1"/>
</dbReference>
<dbReference type="SMR" id="Q2NW87"/>
<dbReference type="STRING" id="343509.SG0313"/>
<dbReference type="KEGG" id="sgl:SG0313"/>
<dbReference type="eggNOG" id="COG1162">
    <property type="taxonomic scope" value="Bacteria"/>
</dbReference>
<dbReference type="HOGENOM" id="CLU_033617_2_0_6"/>
<dbReference type="OrthoDB" id="9809485at2"/>
<dbReference type="BioCyc" id="SGLO343509:SGP1_RS02875-MONOMER"/>
<dbReference type="Proteomes" id="UP000001932">
    <property type="component" value="Chromosome"/>
</dbReference>
<dbReference type="GO" id="GO:0005737">
    <property type="term" value="C:cytoplasm"/>
    <property type="evidence" value="ECO:0007669"/>
    <property type="project" value="UniProtKB-SubCell"/>
</dbReference>
<dbReference type="GO" id="GO:0005525">
    <property type="term" value="F:GTP binding"/>
    <property type="evidence" value="ECO:0007669"/>
    <property type="project" value="UniProtKB-UniRule"/>
</dbReference>
<dbReference type="GO" id="GO:0003924">
    <property type="term" value="F:GTPase activity"/>
    <property type="evidence" value="ECO:0007669"/>
    <property type="project" value="UniProtKB-UniRule"/>
</dbReference>
<dbReference type="GO" id="GO:0046872">
    <property type="term" value="F:metal ion binding"/>
    <property type="evidence" value="ECO:0007669"/>
    <property type="project" value="UniProtKB-KW"/>
</dbReference>
<dbReference type="GO" id="GO:0019843">
    <property type="term" value="F:rRNA binding"/>
    <property type="evidence" value="ECO:0007669"/>
    <property type="project" value="UniProtKB-KW"/>
</dbReference>
<dbReference type="GO" id="GO:0042274">
    <property type="term" value="P:ribosomal small subunit biogenesis"/>
    <property type="evidence" value="ECO:0007669"/>
    <property type="project" value="UniProtKB-UniRule"/>
</dbReference>
<dbReference type="CDD" id="cd01854">
    <property type="entry name" value="YjeQ_EngC"/>
    <property type="match status" value="1"/>
</dbReference>
<dbReference type="Gene3D" id="2.40.50.140">
    <property type="entry name" value="Nucleic acid-binding proteins"/>
    <property type="match status" value="1"/>
</dbReference>
<dbReference type="Gene3D" id="3.40.50.300">
    <property type="entry name" value="P-loop containing nucleotide triphosphate hydrolases"/>
    <property type="match status" value="1"/>
</dbReference>
<dbReference type="Gene3D" id="1.10.40.50">
    <property type="entry name" value="Probable gtpase engc, domain 3"/>
    <property type="match status" value="1"/>
</dbReference>
<dbReference type="HAMAP" id="MF_01820">
    <property type="entry name" value="GTPase_RsgA"/>
    <property type="match status" value="1"/>
</dbReference>
<dbReference type="InterPro" id="IPR030378">
    <property type="entry name" value="G_CP_dom"/>
</dbReference>
<dbReference type="InterPro" id="IPR012340">
    <property type="entry name" value="NA-bd_OB-fold"/>
</dbReference>
<dbReference type="InterPro" id="IPR027417">
    <property type="entry name" value="P-loop_NTPase"/>
</dbReference>
<dbReference type="InterPro" id="IPR004881">
    <property type="entry name" value="Ribosome_biogen_GTPase_RsgA"/>
</dbReference>
<dbReference type="InterPro" id="IPR010914">
    <property type="entry name" value="RsgA_GTPase_dom"/>
</dbReference>
<dbReference type="NCBIfam" id="NF008931">
    <property type="entry name" value="PRK12288.1"/>
    <property type="match status" value="1"/>
</dbReference>
<dbReference type="NCBIfam" id="TIGR00157">
    <property type="entry name" value="ribosome small subunit-dependent GTPase A"/>
    <property type="match status" value="1"/>
</dbReference>
<dbReference type="PANTHER" id="PTHR32120">
    <property type="entry name" value="SMALL RIBOSOMAL SUBUNIT BIOGENESIS GTPASE RSGA"/>
    <property type="match status" value="1"/>
</dbReference>
<dbReference type="PANTHER" id="PTHR32120:SF11">
    <property type="entry name" value="SMALL RIBOSOMAL SUBUNIT BIOGENESIS GTPASE RSGA 1, MITOCHONDRIAL-RELATED"/>
    <property type="match status" value="1"/>
</dbReference>
<dbReference type="Pfam" id="PF03193">
    <property type="entry name" value="RsgA_GTPase"/>
    <property type="match status" value="1"/>
</dbReference>
<dbReference type="SUPFAM" id="SSF52540">
    <property type="entry name" value="P-loop containing nucleoside triphosphate hydrolases"/>
    <property type="match status" value="1"/>
</dbReference>
<dbReference type="PROSITE" id="PS50936">
    <property type="entry name" value="ENGC_GTPASE"/>
    <property type="match status" value="1"/>
</dbReference>
<dbReference type="PROSITE" id="PS51721">
    <property type="entry name" value="G_CP"/>
    <property type="match status" value="1"/>
</dbReference>
<feature type="chain" id="PRO_1000188141" description="Small ribosomal subunit biogenesis GTPase RsgA">
    <location>
        <begin position="1"/>
        <end position="345"/>
    </location>
</feature>
<feature type="domain" description="CP-type G" evidence="2">
    <location>
        <begin position="103"/>
        <end position="273"/>
    </location>
</feature>
<feature type="region of interest" description="Disordered" evidence="3">
    <location>
        <begin position="1"/>
        <end position="36"/>
    </location>
</feature>
<feature type="compositionally biased region" description="Basic and acidic residues" evidence="3">
    <location>
        <begin position="23"/>
        <end position="34"/>
    </location>
</feature>
<feature type="binding site" evidence="1">
    <location>
        <begin position="159"/>
        <end position="162"/>
    </location>
    <ligand>
        <name>GTP</name>
        <dbReference type="ChEBI" id="CHEBI:37565"/>
    </ligand>
</feature>
<feature type="binding site" evidence="1">
    <location>
        <begin position="213"/>
        <end position="221"/>
    </location>
    <ligand>
        <name>GTP</name>
        <dbReference type="ChEBI" id="CHEBI:37565"/>
    </ligand>
</feature>
<feature type="binding site" evidence="1">
    <location>
        <position position="297"/>
    </location>
    <ligand>
        <name>Zn(2+)</name>
        <dbReference type="ChEBI" id="CHEBI:29105"/>
    </ligand>
</feature>
<feature type="binding site" evidence="1">
    <location>
        <position position="302"/>
    </location>
    <ligand>
        <name>Zn(2+)</name>
        <dbReference type="ChEBI" id="CHEBI:29105"/>
    </ligand>
</feature>
<feature type="binding site" evidence="1">
    <location>
        <position position="304"/>
    </location>
    <ligand>
        <name>Zn(2+)</name>
        <dbReference type="ChEBI" id="CHEBI:29105"/>
    </ligand>
</feature>
<feature type="binding site" evidence="1">
    <location>
        <position position="310"/>
    </location>
    <ligand>
        <name>Zn(2+)</name>
        <dbReference type="ChEBI" id="CHEBI:29105"/>
    </ligand>
</feature>
<name>RSGA_SODGM</name>
<evidence type="ECO:0000255" key="1">
    <source>
        <dbReference type="HAMAP-Rule" id="MF_01820"/>
    </source>
</evidence>
<evidence type="ECO:0000255" key="2">
    <source>
        <dbReference type="PROSITE-ProRule" id="PRU01058"/>
    </source>
</evidence>
<evidence type="ECO:0000256" key="3">
    <source>
        <dbReference type="SAM" id="MobiDB-lite"/>
    </source>
</evidence>